<organism>
    <name type="scientific">Mycobacterium bovis (strain ATCC BAA-935 / AF2122/97)</name>
    <dbReference type="NCBI Taxonomy" id="233413"/>
    <lineage>
        <taxon>Bacteria</taxon>
        <taxon>Bacillati</taxon>
        <taxon>Actinomycetota</taxon>
        <taxon>Actinomycetes</taxon>
        <taxon>Mycobacteriales</taxon>
        <taxon>Mycobacteriaceae</taxon>
        <taxon>Mycobacterium</taxon>
        <taxon>Mycobacterium tuberculosis complex</taxon>
    </lineage>
</organism>
<dbReference type="EC" id="3.6.4.-" evidence="1"/>
<dbReference type="EMBL" id="LT708304">
    <property type="protein sequence ID" value="SIT99932.1"/>
    <property type="molecule type" value="Genomic_DNA"/>
</dbReference>
<dbReference type="RefSeq" id="NP_854983.1">
    <property type="nucleotide sequence ID" value="NC_002945.3"/>
</dbReference>
<dbReference type="RefSeq" id="WP_003898814.1">
    <property type="nucleotide sequence ID" value="NC_002945.4"/>
</dbReference>
<dbReference type="SMR" id="P66029"/>
<dbReference type="GeneID" id="45425271"/>
<dbReference type="KEGG" id="mbo:BQ2027_MB1329"/>
<dbReference type="PATRIC" id="fig|233413.5.peg.1456"/>
<dbReference type="Proteomes" id="UP000001419">
    <property type="component" value="Chromosome"/>
</dbReference>
<dbReference type="GO" id="GO:0005524">
    <property type="term" value="F:ATP binding"/>
    <property type="evidence" value="ECO:0007669"/>
    <property type="project" value="UniProtKB-UniRule"/>
</dbReference>
<dbReference type="GO" id="GO:0016887">
    <property type="term" value="F:ATP hydrolysis activity"/>
    <property type="evidence" value="ECO:0007669"/>
    <property type="project" value="InterPro"/>
</dbReference>
<dbReference type="GO" id="GO:0008186">
    <property type="term" value="F:ATP-dependent activity, acting on RNA"/>
    <property type="evidence" value="ECO:0007669"/>
    <property type="project" value="InterPro"/>
</dbReference>
<dbReference type="GO" id="GO:0004386">
    <property type="term" value="F:helicase activity"/>
    <property type="evidence" value="ECO:0007669"/>
    <property type="project" value="UniProtKB-UniRule"/>
</dbReference>
<dbReference type="GO" id="GO:0003723">
    <property type="term" value="F:RNA binding"/>
    <property type="evidence" value="ECO:0007669"/>
    <property type="project" value="UniProtKB-UniRule"/>
</dbReference>
<dbReference type="GO" id="GO:0006353">
    <property type="term" value="P:DNA-templated transcription termination"/>
    <property type="evidence" value="ECO:0007669"/>
    <property type="project" value="UniProtKB-UniRule"/>
</dbReference>
<dbReference type="CDD" id="cd01128">
    <property type="entry name" value="rho_factor_C"/>
    <property type="match status" value="1"/>
</dbReference>
<dbReference type="FunFam" id="2.40.50.140:FF:000316">
    <property type="entry name" value="Transcription termination factor Rho"/>
    <property type="match status" value="1"/>
</dbReference>
<dbReference type="FunFam" id="3.40.50.300:FF:000072">
    <property type="entry name" value="Transcription termination factor Rho"/>
    <property type="match status" value="1"/>
</dbReference>
<dbReference type="Gene3D" id="2.40.50.140">
    <property type="entry name" value="Nucleic acid-binding proteins"/>
    <property type="match status" value="1"/>
</dbReference>
<dbReference type="Gene3D" id="3.40.50.300">
    <property type="entry name" value="P-loop containing nucleotide triphosphate hydrolases"/>
    <property type="match status" value="1"/>
</dbReference>
<dbReference type="HAMAP" id="MF_01884">
    <property type="entry name" value="Rho"/>
    <property type="match status" value="1"/>
</dbReference>
<dbReference type="InterPro" id="IPR003593">
    <property type="entry name" value="AAA+_ATPase"/>
</dbReference>
<dbReference type="InterPro" id="IPR000194">
    <property type="entry name" value="ATPase_F1/V1/A1_a/bsu_nucl-bd"/>
</dbReference>
<dbReference type="InterPro" id="IPR011129">
    <property type="entry name" value="CSD"/>
</dbReference>
<dbReference type="InterPro" id="IPR012340">
    <property type="entry name" value="NA-bd_OB-fold"/>
</dbReference>
<dbReference type="InterPro" id="IPR027417">
    <property type="entry name" value="P-loop_NTPase"/>
</dbReference>
<dbReference type="InterPro" id="IPR011112">
    <property type="entry name" value="Rho-like_N"/>
</dbReference>
<dbReference type="InterPro" id="IPR041703">
    <property type="entry name" value="Rho_factor_ATP-bd"/>
</dbReference>
<dbReference type="InterPro" id="IPR036269">
    <property type="entry name" value="Rho_N_sf"/>
</dbReference>
<dbReference type="InterPro" id="IPR011113">
    <property type="entry name" value="Rho_RNA-bd"/>
</dbReference>
<dbReference type="InterPro" id="IPR004665">
    <property type="entry name" value="Term_rho"/>
</dbReference>
<dbReference type="NCBIfam" id="NF006886">
    <property type="entry name" value="PRK09376.1"/>
    <property type="match status" value="1"/>
</dbReference>
<dbReference type="NCBIfam" id="TIGR00767">
    <property type="entry name" value="rho"/>
    <property type="match status" value="1"/>
</dbReference>
<dbReference type="PANTHER" id="PTHR46425">
    <property type="entry name" value="TRANSCRIPTION TERMINATION FACTOR RHO"/>
    <property type="match status" value="1"/>
</dbReference>
<dbReference type="PANTHER" id="PTHR46425:SF1">
    <property type="entry name" value="TRANSCRIPTION TERMINATION FACTOR RHO"/>
    <property type="match status" value="1"/>
</dbReference>
<dbReference type="Pfam" id="PF00006">
    <property type="entry name" value="ATP-synt_ab"/>
    <property type="match status" value="1"/>
</dbReference>
<dbReference type="Pfam" id="PF07498">
    <property type="entry name" value="Rho_N"/>
    <property type="match status" value="1"/>
</dbReference>
<dbReference type="Pfam" id="PF07497">
    <property type="entry name" value="Rho_RNA_bind"/>
    <property type="match status" value="1"/>
</dbReference>
<dbReference type="SMART" id="SM00382">
    <property type="entry name" value="AAA"/>
    <property type="match status" value="1"/>
</dbReference>
<dbReference type="SMART" id="SM00357">
    <property type="entry name" value="CSP"/>
    <property type="match status" value="1"/>
</dbReference>
<dbReference type="SMART" id="SM00959">
    <property type="entry name" value="Rho_N"/>
    <property type="match status" value="1"/>
</dbReference>
<dbReference type="SUPFAM" id="SSF50249">
    <property type="entry name" value="Nucleic acid-binding proteins"/>
    <property type="match status" value="1"/>
</dbReference>
<dbReference type="SUPFAM" id="SSF52540">
    <property type="entry name" value="P-loop containing nucleoside triphosphate hydrolases"/>
    <property type="match status" value="1"/>
</dbReference>
<dbReference type="SUPFAM" id="SSF68912">
    <property type="entry name" value="Rho N-terminal domain-like"/>
    <property type="match status" value="1"/>
</dbReference>
<dbReference type="PROSITE" id="PS51856">
    <property type="entry name" value="RHO_RNA_BD"/>
    <property type="match status" value="1"/>
</dbReference>
<sequence length="602" mass="65133">MTDTDLITAGESTDGKPSDAAATDPPDLNADEPAGSLATMVLPELRALANRAGVKGTSGMRKNELIAAIEEIRRQANGAPAVDRSAQEHDKGDRPPSSEAPATQGEQTPTEQIDSQSQQVRPERRSATREAGPSGSGERAGTAADDTDNRQGGQQDAKTEERGTDAGGDQGGDQQASGGQQARGDEDGEARQGRRGRRFRDRRRRGERSGDGAEAELREDDVVQPVAGILDVLDNYAFVRTSGYLPGPHDVYVSMNMVRKNGMRRGDAVTGAVRVPKEGEQPNQRQKFNPLVRLDSINGGSVEDAKKRPEFGKLTPLYPNQRLRLETSTERLTTRVIDLIMPIGKGQRALIVSPPKAGKTTILQDIANAITRNNPECHLMVVLVDERPEEVTDMQRSVKGEVIASTFDRPPSDHTSVAELAIERAKRLVEQGKDVVVLLDSITRLGRAYNNASPASGRILSGGVDSTALYPPKRFLGAARNIEEGGSLTIIATAMVETGSTGDTVIFEEFKGTGNAELKLDRKIAERRVFPAVDVNPSGTRKDELLLSPDEFAIVHKLRRVLSGLDSHQAIDLLMSQLRKTKNNYEFLVQVSKTTPGSMDSD</sequence>
<reference key="1">
    <citation type="journal article" date="2003" name="Proc. Natl. Acad. Sci. U.S.A.">
        <title>The complete genome sequence of Mycobacterium bovis.</title>
        <authorList>
            <person name="Garnier T."/>
            <person name="Eiglmeier K."/>
            <person name="Camus J.-C."/>
            <person name="Medina N."/>
            <person name="Mansoor H."/>
            <person name="Pryor M."/>
            <person name="Duthoy S."/>
            <person name="Grondin S."/>
            <person name="Lacroix C."/>
            <person name="Monsempe C."/>
            <person name="Simon S."/>
            <person name="Harris B."/>
            <person name="Atkin R."/>
            <person name="Doggett J."/>
            <person name="Mayes R."/>
            <person name="Keating L."/>
            <person name="Wheeler P.R."/>
            <person name="Parkhill J."/>
            <person name="Barrell B.G."/>
            <person name="Cole S.T."/>
            <person name="Gordon S.V."/>
            <person name="Hewinson R.G."/>
        </authorList>
    </citation>
    <scope>NUCLEOTIDE SEQUENCE [LARGE SCALE GENOMIC DNA]</scope>
    <source>
        <strain>ATCC BAA-935 / AF2122/97</strain>
    </source>
</reference>
<reference key="2">
    <citation type="journal article" date="2017" name="Genome Announc.">
        <title>Updated reference genome sequence and annotation of Mycobacterium bovis AF2122/97.</title>
        <authorList>
            <person name="Malone K.M."/>
            <person name="Farrell D."/>
            <person name="Stuber T.P."/>
            <person name="Schubert O.T."/>
            <person name="Aebersold R."/>
            <person name="Robbe-Austerman S."/>
            <person name="Gordon S.V."/>
        </authorList>
    </citation>
    <scope>NUCLEOTIDE SEQUENCE [LARGE SCALE GENOMIC DNA]</scope>
    <scope>GENOME REANNOTATION</scope>
    <source>
        <strain>ATCC BAA-935 / AF2122/97</strain>
    </source>
</reference>
<evidence type="ECO:0000255" key="1">
    <source>
        <dbReference type="HAMAP-Rule" id="MF_01884"/>
    </source>
</evidence>
<evidence type="ECO:0000255" key="2">
    <source>
        <dbReference type="PROSITE-ProRule" id="PRU01203"/>
    </source>
</evidence>
<evidence type="ECO:0000256" key="3">
    <source>
        <dbReference type="SAM" id="MobiDB-lite"/>
    </source>
</evidence>
<name>RHO_MYCBO</name>
<proteinExistence type="inferred from homology"/>
<gene>
    <name evidence="1" type="primary">rho</name>
    <name type="ordered locus">BQ2027_MB1329</name>
</gene>
<comment type="function">
    <text evidence="1">Facilitates transcription termination by a mechanism that involves Rho binding to the nascent RNA, activation of Rho's RNA-dependent ATPase activity, and release of the mRNA from the DNA template.</text>
</comment>
<comment type="subunit">
    <text evidence="1">Homohexamer. The homohexamer assembles into an open ring structure.</text>
</comment>
<comment type="similarity">
    <text evidence="1">Belongs to the Rho family.</text>
</comment>
<feature type="chain" id="PRO_0000188971" description="Transcription termination factor Rho">
    <location>
        <begin position="1"/>
        <end position="602"/>
    </location>
</feature>
<feature type="domain" description="Rho RNA-BD" evidence="2">
    <location>
        <begin position="223"/>
        <end position="301"/>
    </location>
</feature>
<feature type="region of interest" description="Disordered" evidence="3">
    <location>
        <begin position="1"/>
        <end position="35"/>
    </location>
</feature>
<feature type="region of interest" description="Disordered" evidence="3">
    <location>
        <begin position="76"/>
        <end position="216"/>
    </location>
</feature>
<feature type="compositionally biased region" description="Basic and acidic residues" evidence="3">
    <location>
        <begin position="85"/>
        <end position="96"/>
    </location>
</feature>
<feature type="compositionally biased region" description="Polar residues" evidence="3">
    <location>
        <begin position="100"/>
        <end position="120"/>
    </location>
</feature>
<feature type="compositionally biased region" description="Low complexity" evidence="3">
    <location>
        <begin position="172"/>
        <end position="182"/>
    </location>
</feature>
<feature type="compositionally biased region" description="Basic and acidic residues" evidence="3">
    <location>
        <begin position="183"/>
        <end position="192"/>
    </location>
</feature>
<feature type="compositionally biased region" description="Basic residues" evidence="3">
    <location>
        <begin position="193"/>
        <end position="206"/>
    </location>
</feature>
<feature type="binding site" evidence="1">
    <location>
        <begin position="344"/>
        <end position="349"/>
    </location>
    <ligand>
        <name>ATP</name>
        <dbReference type="ChEBI" id="CHEBI:30616"/>
    </ligand>
</feature>
<feature type="binding site" evidence="1">
    <location>
        <begin position="356"/>
        <end position="361"/>
    </location>
    <ligand>
        <name>ATP</name>
        <dbReference type="ChEBI" id="CHEBI:30616"/>
    </ligand>
</feature>
<feature type="binding site" evidence="1">
    <location>
        <position position="387"/>
    </location>
    <ligand>
        <name>ATP</name>
        <dbReference type="ChEBI" id="CHEBI:30616"/>
    </ligand>
</feature>
<protein>
    <recommendedName>
        <fullName evidence="1">Transcription termination factor Rho</fullName>
        <ecNumber evidence="1">3.6.4.-</ecNumber>
    </recommendedName>
    <alternativeName>
        <fullName evidence="1">ATP-dependent helicase Rho</fullName>
    </alternativeName>
</protein>
<accession>P66029</accession>
<accession>A0A1R3Y028</accession>
<accession>Q10607</accession>
<accession>X2BHJ0</accession>
<keyword id="KW-0067">ATP-binding</keyword>
<keyword id="KW-0347">Helicase</keyword>
<keyword id="KW-0378">Hydrolase</keyword>
<keyword id="KW-0547">Nucleotide-binding</keyword>
<keyword id="KW-1185">Reference proteome</keyword>
<keyword id="KW-0694">RNA-binding</keyword>
<keyword id="KW-0804">Transcription</keyword>
<keyword id="KW-0805">Transcription regulation</keyword>
<keyword id="KW-0806">Transcription termination</keyword>